<comment type="function">
    <text evidence="1">Catalyzes the hydroxylation of 2-nonaprenyl-3-methyl-6-methoxy-1,4-benzoquinol during ubiquinone biosynthesis.</text>
</comment>
<comment type="catalytic activity">
    <reaction evidence="1">
        <text>a 5-methoxy-2-methyl-3-(all-trans-polyprenyl)benzene-1,4-diol + AH2 + O2 = a 3-demethylubiquinol + A + H2O</text>
        <dbReference type="Rhea" id="RHEA:50908"/>
        <dbReference type="Rhea" id="RHEA-COMP:10859"/>
        <dbReference type="Rhea" id="RHEA-COMP:10914"/>
        <dbReference type="ChEBI" id="CHEBI:13193"/>
        <dbReference type="ChEBI" id="CHEBI:15377"/>
        <dbReference type="ChEBI" id="CHEBI:15379"/>
        <dbReference type="ChEBI" id="CHEBI:17499"/>
        <dbReference type="ChEBI" id="CHEBI:84167"/>
        <dbReference type="ChEBI" id="CHEBI:84422"/>
        <dbReference type="EC" id="1.14.99.60"/>
    </reaction>
</comment>
<comment type="cofactor">
    <cofactor evidence="1">
        <name>Fe cation</name>
        <dbReference type="ChEBI" id="CHEBI:24875"/>
    </cofactor>
    <text evidence="1">Binds 2 iron ions per subunit.</text>
</comment>
<comment type="pathway">
    <text evidence="1">Cofactor biosynthesis; ubiquinone biosynthesis.</text>
</comment>
<comment type="subcellular location">
    <subcellularLocation>
        <location evidence="1">Cell membrane</location>
        <topology evidence="1">Peripheral membrane protein</topology>
    </subcellularLocation>
</comment>
<comment type="similarity">
    <text evidence="1">Belongs to the COQ7 family.</text>
</comment>
<protein>
    <recommendedName>
        <fullName evidence="1">3-demethoxyubiquinol 3-hydroxylase</fullName>
        <shortName evidence="1">DMQ hydroxylase</shortName>
        <ecNumber evidence="1">1.14.99.60</ecNumber>
    </recommendedName>
    <alternativeName>
        <fullName evidence="1">2-nonaprenyl-3-methyl-6-methoxy-1,4-benzoquinol hydroxylase</fullName>
    </alternativeName>
</protein>
<feature type="chain" id="PRO_0000338691" description="3-demethoxyubiquinol 3-hydroxylase">
    <location>
        <begin position="1"/>
        <end position="208"/>
    </location>
</feature>
<feature type="binding site" evidence="1">
    <location>
        <position position="57"/>
    </location>
    <ligand>
        <name>Fe cation</name>
        <dbReference type="ChEBI" id="CHEBI:24875"/>
        <label>1</label>
    </ligand>
</feature>
<feature type="binding site" evidence="1">
    <location>
        <position position="87"/>
    </location>
    <ligand>
        <name>Fe cation</name>
        <dbReference type="ChEBI" id="CHEBI:24875"/>
        <label>1</label>
    </ligand>
</feature>
<feature type="binding site" evidence="1">
    <location>
        <position position="87"/>
    </location>
    <ligand>
        <name>Fe cation</name>
        <dbReference type="ChEBI" id="CHEBI:24875"/>
        <label>2</label>
    </ligand>
</feature>
<feature type="binding site" evidence="1">
    <location>
        <position position="90"/>
    </location>
    <ligand>
        <name>Fe cation</name>
        <dbReference type="ChEBI" id="CHEBI:24875"/>
        <label>1</label>
    </ligand>
</feature>
<feature type="binding site" evidence="1">
    <location>
        <position position="139"/>
    </location>
    <ligand>
        <name>Fe cation</name>
        <dbReference type="ChEBI" id="CHEBI:24875"/>
        <label>2</label>
    </ligand>
</feature>
<feature type="binding site" evidence="1">
    <location>
        <position position="171"/>
    </location>
    <ligand>
        <name>Fe cation</name>
        <dbReference type="ChEBI" id="CHEBI:24875"/>
        <label>1</label>
    </ligand>
</feature>
<feature type="binding site" evidence="1">
    <location>
        <position position="171"/>
    </location>
    <ligand>
        <name>Fe cation</name>
        <dbReference type="ChEBI" id="CHEBI:24875"/>
        <label>2</label>
    </ligand>
</feature>
<feature type="binding site" evidence="1">
    <location>
        <position position="174"/>
    </location>
    <ligand>
        <name>Fe cation</name>
        <dbReference type="ChEBI" id="CHEBI:24875"/>
        <label>2</label>
    </ligand>
</feature>
<gene>
    <name evidence="1" type="primary">coq7</name>
    <name type="synonym">ubiF</name>
</gene>
<dbReference type="EC" id="1.14.99.60" evidence="1"/>
<dbReference type="EMBL" id="AM490442">
    <property type="protein sequence ID" value="CAM32537.1"/>
    <property type="molecule type" value="Genomic_DNA"/>
</dbReference>
<dbReference type="RefSeq" id="WP_013235790.1">
    <property type="nucleotide sequence ID" value="NZ_JWZZ01000016.1"/>
</dbReference>
<dbReference type="SMR" id="A2RPN0"/>
<dbReference type="GeneID" id="29390403"/>
<dbReference type="KEGG" id="hsz:ACP92_19210"/>
<dbReference type="PATRIC" id="fig|964.11.peg.4035"/>
<dbReference type="OMA" id="NPLWYGG"/>
<dbReference type="UniPathway" id="UPA00232"/>
<dbReference type="GO" id="GO:0005886">
    <property type="term" value="C:plasma membrane"/>
    <property type="evidence" value="ECO:0007669"/>
    <property type="project" value="UniProtKB-SubCell"/>
</dbReference>
<dbReference type="GO" id="GO:0008682">
    <property type="term" value="F:3-demethoxyubiquinol 3-hydroxylase activity"/>
    <property type="evidence" value="ECO:0007669"/>
    <property type="project" value="UniProtKB-EC"/>
</dbReference>
<dbReference type="GO" id="GO:0046872">
    <property type="term" value="F:metal ion binding"/>
    <property type="evidence" value="ECO:0007669"/>
    <property type="project" value="UniProtKB-KW"/>
</dbReference>
<dbReference type="GO" id="GO:0006744">
    <property type="term" value="P:ubiquinone biosynthetic process"/>
    <property type="evidence" value="ECO:0007669"/>
    <property type="project" value="UniProtKB-UniRule"/>
</dbReference>
<dbReference type="CDD" id="cd01042">
    <property type="entry name" value="DMQH"/>
    <property type="match status" value="1"/>
</dbReference>
<dbReference type="Gene3D" id="1.20.1260.10">
    <property type="match status" value="1"/>
</dbReference>
<dbReference type="HAMAP" id="MF_01658">
    <property type="entry name" value="COQ7"/>
    <property type="match status" value="1"/>
</dbReference>
<dbReference type="InterPro" id="IPR047809">
    <property type="entry name" value="COQ7_proteobact"/>
</dbReference>
<dbReference type="InterPro" id="IPR012347">
    <property type="entry name" value="Ferritin-like"/>
</dbReference>
<dbReference type="InterPro" id="IPR009078">
    <property type="entry name" value="Ferritin-like_SF"/>
</dbReference>
<dbReference type="InterPro" id="IPR011566">
    <property type="entry name" value="Ubq_synth_Coq7"/>
</dbReference>
<dbReference type="NCBIfam" id="NF033656">
    <property type="entry name" value="DMQ_monoox_COQ7"/>
    <property type="match status" value="1"/>
</dbReference>
<dbReference type="PANTHER" id="PTHR11237:SF4">
    <property type="entry name" value="5-DEMETHOXYUBIQUINONE HYDROXYLASE, MITOCHONDRIAL"/>
    <property type="match status" value="1"/>
</dbReference>
<dbReference type="PANTHER" id="PTHR11237">
    <property type="entry name" value="COENZYME Q10 BIOSYNTHESIS PROTEIN 7"/>
    <property type="match status" value="1"/>
</dbReference>
<dbReference type="Pfam" id="PF03232">
    <property type="entry name" value="COQ7"/>
    <property type="match status" value="1"/>
</dbReference>
<dbReference type="SUPFAM" id="SSF47240">
    <property type="entry name" value="Ferritin-like"/>
    <property type="match status" value="1"/>
</dbReference>
<proteinExistence type="inferred from homology"/>
<organism>
    <name type="scientific">Herbaspirillum seropedicae</name>
    <dbReference type="NCBI Taxonomy" id="964"/>
    <lineage>
        <taxon>Bacteria</taxon>
        <taxon>Pseudomonadati</taxon>
        <taxon>Pseudomonadota</taxon>
        <taxon>Betaproteobacteria</taxon>
        <taxon>Burkholderiales</taxon>
        <taxon>Oxalobacteraceae</taxon>
        <taxon>Herbaspirillum</taxon>
    </lineage>
</organism>
<reference key="1">
    <citation type="journal article" date="2007" name="Proteomics">
        <title>A two-dimensional proteome reference map of Herbaspirillum seropedicae proteins.</title>
        <authorList>
            <person name="Chaves D.F.S."/>
            <person name="Ferrer P.P."/>
            <person name="de Souza E.M."/>
            <person name="Gruz L.M."/>
            <person name="Monteiro R.A."/>
            <person name="de Oliveira Pedrosa F."/>
        </authorList>
    </citation>
    <scope>NUCLEOTIDE SEQUENCE [GENOMIC DNA]</scope>
</reference>
<reference key="2">
    <citation type="submission" date="2007-02" db="EMBL/GenBank/DDBJ databases">
        <title>Genome sequence of the nitrogen fixing bacterium Herbaspirillum seropedicae.</title>
        <authorList>
            <person name="Pedrosa F.O."/>
        </authorList>
    </citation>
    <scope>NUCLEOTIDE SEQUENCE [GENOMIC DNA]</scope>
</reference>
<keyword id="KW-1003">Cell membrane</keyword>
<keyword id="KW-0408">Iron</keyword>
<keyword id="KW-0472">Membrane</keyword>
<keyword id="KW-0479">Metal-binding</keyword>
<keyword id="KW-0503">Monooxygenase</keyword>
<keyword id="KW-0560">Oxidoreductase</keyword>
<keyword id="KW-0831">Ubiquinone biosynthesis</keyword>
<accession>A2RPN0</accession>
<name>COQ7_HERSE</name>
<sequence length="208" mass="22919">MQFVDELISDFDKALRVINGVVFESRPNPGRGLPDGVMSEAEKRHAAGLMRVNNVGEVCAQALYDAQGRFAQKAEIKNAFARAGIEEEDHLAWTAERLRELGSHTSLLNPLWYGGAYVLGSIAARLGDARNLGFVSETERQVEHHLMGHLDKLPAQDNRSRAIVDQMRIDEIEHGQAARDLGAAEMPAPVKGLMKAMAKVMTTVAYRI</sequence>
<evidence type="ECO:0000255" key="1">
    <source>
        <dbReference type="HAMAP-Rule" id="MF_01658"/>
    </source>
</evidence>